<dbReference type="EMBL" id="AE000511">
    <property type="protein sequence ID" value="AAD08360.1"/>
    <property type="molecule type" value="Genomic_DNA"/>
</dbReference>
<dbReference type="PIR" id="B64682">
    <property type="entry name" value="B64682"/>
</dbReference>
<dbReference type="RefSeq" id="NP_208090.1">
    <property type="nucleotide sequence ID" value="NC_000915.1"/>
</dbReference>
<dbReference type="RefSeq" id="WP_000090248.1">
    <property type="nucleotide sequence ID" value="NC_018939.1"/>
</dbReference>
<dbReference type="SMR" id="P65108"/>
<dbReference type="FunCoup" id="P65108">
    <property type="interactions" value="314"/>
</dbReference>
<dbReference type="IntAct" id="P65108">
    <property type="interactions" value="15"/>
</dbReference>
<dbReference type="MINT" id="P65108"/>
<dbReference type="STRING" id="85962.HP_1298"/>
<dbReference type="PaxDb" id="85962-C694_06705"/>
<dbReference type="EnsemblBacteria" id="AAD08360">
    <property type="protein sequence ID" value="AAD08360"/>
    <property type="gene ID" value="HP_1298"/>
</dbReference>
<dbReference type="GeneID" id="93237571"/>
<dbReference type="KEGG" id="heo:C694_06705"/>
<dbReference type="KEGG" id="hpy:HP_1298"/>
<dbReference type="PATRIC" id="fig|85962.47.peg.1392"/>
<dbReference type="eggNOG" id="COG0361">
    <property type="taxonomic scope" value="Bacteria"/>
</dbReference>
<dbReference type="InParanoid" id="P65108"/>
<dbReference type="OrthoDB" id="9803250at2"/>
<dbReference type="PhylomeDB" id="P65108"/>
<dbReference type="Proteomes" id="UP000000429">
    <property type="component" value="Chromosome"/>
</dbReference>
<dbReference type="GO" id="GO:0005829">
    <property type="term" value="C:cytosol"/>
    <property type="evidence" value="ECO:0000318"/>
    <property type="project" value="GO_Central"/>
</dbReference>
<dbReference type="GO" id="GO:0043022">
    <property type="term" value="F:ribosome binding"/>
    <property type="evidence" value="ECO:0000318"/>
    <property type="project" value="GO_Central"/>
</dbReference>
<dbReference type="GO" id="GO:0019843">
    <property type="term" value="F:rRNA binding"/>
    <property type="evidence" value="ECO:0007669"/>
    <property type="project" value="UniProtKB-UniRule"/>
</dbReference>
<dbReference type="GO" id="GO:0003743">
    <property type="term" value="F:translation initiation factor activity"/>
    <property type="evidence" value="ECO:0007669"/>
    <property type="project" value="UniProtKB-UniRule"/>
</dbReference>
<dbReference type="CDD" id="cd04451">
    <property type="entry name" value="S1_IF1"/>
    <property type="match status" value="1"/>
</dbReference>
<dbReference type="FunFam" id="2.40.50.140:FF:000002">
    <property type="entry name" value="Translation initiation factor IF-1"/>
    <property type="match status" value="1"/>
</dbReference>
<dbReference type="Gene3D" id="2.40.50.140">
    <property type="entry name" value="Nucleic acid-binding proteins"/>
    <property type="match status" value="1"/>
</dbReference>
<dbReference type="HAMAP" id="MF_00075">
    <property type="entry name" value="IF_1"/>
    <property type="match status" value="1"/>
</dbReference>
<dbReference type="InterPro" id="IPR012340">
    <property type="entry name" value="NA-bd_OB-fold"/>
</dbReference>
<dbReference type="InterPro" id="IPR006196">
    <property type="entry name" value="RNA-binding_domain_S1_IF1"/>
</dbReference>
<dbReference type="InterPro" id="IPR003029">
    <property type="entry name" value="S1_domain"/>
</dbReference>
<dbReference type="InterPro" id="IPR004368">
    <property type="entry name" value="TIF_IF1"/>
</dbReference>
<dbReference type="NCBIfam" id="TIGR00008">
    <property type="entry name" value="infA"/>
    <property type="match status" value="1"/>
</dbReference>
<dbReference type="PANTHER" id="PTHR33370">
    <property type="entry name" value="TRANSLATION INITIATION FACTOR IF-1, CHLOROPLASTIC"/>
    <property type="match status" value="1"/>
</dbReference>
<dbReference type="PANTHER" id="PTHR33370:SF1">
    <property type="entry name" value="TRANSLATION INITIATION FACTOR IF-1, CHLOROPLASTIC"/>
    <property type="match status" value="1"/>
</dbReference>
<dbReference type="Pfam" id="PF01176">
    <property type="entry name" value="eIF-1a"/>
    <property type="match status" value="1"/>
</dbReference>
<dbReference type="SMART" id="SM00316">
    <property type="entry name" value="S1"/>
    <property type="match status" value="1"/>
</dbReference>
<dbReference type="SUPFAM" id="SSF50249">
    <property type="entry name" value="Nucleic acid-binding proteins"/>
    <property type="match status" value="1"/>
</dbReference>
<dbReference type="PROSITE" id="PS50832">
    <property type="entry name" value="S1_IF1_TYPE"/>
    <property type="match status" value="1"/>
</dbReference>
<accession>P65108</accession>
<accession>P55974</accession>
<proteinExistence type="inferred from homology"/>
<sequence>MARDDVIEVDGKVIEALPNATFKVELDNKHVVLCRISGKMRMHYIRIALGDRVKLELTPYSLDKGRITFRYK</sequence>
<evidence type="ECO:0000250" key="1"/>
<evidence type="ECO:0000255" key="2">
    <source>
        <dbReference type="HAMAP-Rule" id="MF_00075"/>
    </source>
</evidence>
<gene>
    <name evidence="2" type="primary">infA</name>
    <name type="ordered locus">HP_1298</name>
</gene>
<feature type="initiator methionine" description="Removed" evidence="1">
    <location>
        <position position="1"/>
    </location>
</feature>
<feature type="chain" id="PRO_0000095799" description="Translation initiation factor IF-1">
    <location>
        <begin position="2"/>
        <end position="72"/>
    </location>
</feature>
<feature type="domain" description="S1-like" evidence="2">
    <location>
        <begin position="2"/>
        <end position="72"/>
    </location>
</feature>
<reference key="1">
    <citation type="journal article" date="1997" name="Nature">
        <title>The complete genome sequence of the gastric pathogen Helicobacter pylori.</title>
        <authorList>
            <person name="Tomb J.-F."/>
            <person name="White O."/>
            <person name="Kerlavage A.R."/>
            <person name="Clayton R.A."/>
            <person name="Sutton G.G."/>
            <person name="Fleischmann R.D."/>
            <person name="Ketchum K.A."/>
            <person name="Klenk H.-P."/>
            <person name="Gill S.R."/>
            <person name="Dougherty B.A."/>
            <person name="Nelson K.E."/>
            <person name="Quackenbush J."/>
            <person name="Zhou L."/>
            <person name="Kirkness E.F."/>
            <person name="Peterson S.N."/>
            <person name="Loftus B.J."/>
            <person name="Richardson D.L."/>
            <person name="Dodson R.J."/>
            <person name="Khalak H.G."/>
            <person name="Glodek A."/>
            <person name="McKenney K."/>
            <person name="FitzGerald L.M."/>
            <person name="Lee N."/>
            <person name="Adams M.D."/>
            <person name="Hickey E.K."/>
            <person name="Berg D.E."/>
            <person name="Gocayne J.D."/>
            <person name="Utterback T.R."/>
            <person name="Peterson J.D."/>
            <person name="Kelley J.M."/>
            <person name="Cotton M.D."/>
            <person name="Weidman J.F."/>
            <person name="Fujii C."/>
            <person name="Bowman C."/>
            <person name="Watthey L."/>
            <person name="Wallin E."/>
            <person name="Hayes W.S."/>
            <person name="Borodovsky M."/>
            <person name="Karp P.D."/>
            <person name="Smith H.O."/>
            <person name="Fraser C.M."/>
            <person name="Venter J.C."/>
        </authorList>
    </citation>
    <scope>NUCLEOTIDE SEQUENCE [LARGE SCALE GENOMIC DNA]</scope>
    <source>
        <strain>ATCC 700392 / 26695</strain>
    </source>
</reference>
<protein>
    <recommendedName>
        <fullName evidence="2">Translation initiation factor IF-1</fullName>
    </recommendedName>
</protein>
<name>IF1_HELPY</name>
<comment type="function">
    <text evidence="2">One of the essential components for the initiation of protein synthesis. Stabilizes the binding of IF-2 and IF-3 on the 30S subunit to which N-formylmethionyl-tRNA(fMet) subsequently binds. Helps modulate mRNA selection, yielding the 30S pre-initiation complex (PIC). Upon addition of the 50S ribosomal subunit IF-1, IF-2 and IF-3 are released leaving the mature 70S translation initiation complex.</text>
</comment>
<comment type="subunit">
    <text evidence="2">Component of the 30S ribosomal translation pre-initiation complex which assembles on the 30S ribosome in the order IF-2 and IF-3, IF-1 and N-formylmethionyl-tRNA(fMet); mRNA recruitment can occur at any time during PIC assembly.</text>
</comment>
<comment type="subcellular location">
    <subcellularLocation>
        <location evidence="2">Cytoplasm</location>
    </subcellularLocation>
</comment>
<comment type="similarity">
    <text evidence="2">Belongs to the IF-1 family.</text>
</comment>
<keyword id="KW-0963">Cytoplasm</keyword>
<keyword id="KW-0396">Initiation factor</keyword>
<keyword id="KW-0648">Protein biosynthesis</keyword>
<keyword id="KW-1185">Reference proteome</keyword>
<keyword id="KW-0694">RNA-binding</keyword>
<keyword id="KW-0699">rRNA-binding</keyword>
<organism>
    <name type="scientific">Helicobacter pylori (strain ATCC 700392 / 26695)</name>
    <name type="common">Campylobacter pylori</name>
    <dbReference type="NCBI Taxonomy" id="85962"/>
    <lineage>
        <taxon>Bacteria</taxon>
        <taxon>Pseudomonadati</taxon>
        <taxon>Campylobacterota</taxon>
        <taxon>Epsilonproteobacteria</taxon>
        <taxon>Campylobacterales</taxon>
        <taxon>Helicobacteraceae</taxon>
        <taxon>Helicobacter</taxon>
    </lineage>
</organism>